<gene>
    <name type="ordered locus">Daci_2032</name>
</gene>
<feature type="chain" id="PRO_1000145487" description="dITP/XTP pyrophosphatase">
    <location>
        <begin position="1"/>
        <end position="200"/>
    </location>
</feature>
<feature type="active site" description="Proton acceptor" evidence="1">
    <location>
        <position position="68"/>
    </location>
</feature>
<feature type="binding site" evidence="1">
    <location>
        <begin position="7"/>
        <end position="12"/>
    </location>
    <ligand>
        <name>substrate</name>
    </ligand>
</feature>
<feature type="binding site" evidence="1">
    <location>
        <position position="68"/>
    </location>
    <ligand>
        <name>Mg(2+)</name>
        <dbReference type="ChEBI" id="CHEBI:18420"/>
    </ligand>
</feature>
<feature type="binding site" evidence="1">
    <location>
        <position position="69"/>
    </location>
    <ligand>
        <name>substrate</name>
    </ligand>
</feature>
<feature type="binding site" evidence="1">
    <location>
        <begin position="154"/>
        <end position="157"/>
    </location>
    <ligand>
        <name>substrate</name>
    </ligand>
</feature>
<feature type="binding site" evidence="1">
    <location>
        <position position="177"/>
    </location>
    <ligand>
        <name>substrate</name>
    </ligand>
</feature>
<feature type="binding site" evidence="1">
    <location>
        <begin position="182"/>
        <end position="183"/>
    </location>
    <ligand>
        <name>substrate</name>
    </ligand>
</feature>
<sequence>MKIVLASNNRGKLAELQAMFAPLGVELIRQGDLFEGEAPEPHCTFVENALSKARFAAERTGLPAIADDAGMCVSHFGGLPGVDTAYYCTQFGYEKSDDNNVRALLEQMQGVADRRAAMVSTLVGVRSARDPEPLIAMGRVLGEITTERRGTQGFGFDPVMYIPELGQTFAEMDPAVKHAHSHRGRATLQMIELVRERWVR</sequence>
<dbReference type="EC" id="3.6.1.66" evidence="1"/>
<dbReference type="EMBL" id="CP000884">
    <property type="protein sequence ID" value="ABX34672.1"/>
    <property type="molecule type" value="Genomic_DNA"/>
</dbReference>
<dbReference type="SMR" id="A9BTA7"/>
<dbReference type="STRING" id="398578.Daci_2032"/>
<dbReference type="GeneID" id="24118505"/>
<dbReference type="KEGG" id="dac:Daci_2032"/>
<dbReference type="eggNOG" id="COG0127">
    <property type="taxonomic scope" value="Bacteria"/>
</dbReference>
<dbReference type="HOGENOM" id="CLU_082080_0_3_4"/>
<dbReference type="Proteomes" id="UP000000784">
    <property type="component" value="Chromosome"/>
</dbReference>
<dbReference type="GO" id="GO:0005829">
    <property type="term" value="C:cytosol"/>
    <property type="evidence" value="ECO:0007669"/>
    <property type="project" value="TreeGrafter"/>
</dbReference>
<dbReference type="GO" id="GO:0035870">
    <property type="term" value="F:dITP diphosphatase activity"/>
    <property type="evidence" value="ECO:0007669"/>
    <property type="project" value="RHEA"/>
</dbReference>
<dbReference type="GO" id="GO:0036220">
    <property type="term" value="F:ITP diphosphatase activity"/>
    <property type="evidence" value="ECO:0007669"/>
    <property type="project" value="UniProtKB-EC"/>
</dbReference>
<dbReference type="GO" id="GO:0046872">
    <property type="term" value="F:metal ion binding"/>
    <property type="evidence" value="ECO:0007669"/>
    <property type="project" value="UniProtKB-KW"/>
</dbReference>
<dbReference type="GO" id="GO:0000166">
    <property type="term" value="F:nucleotide binding"/>
    <property type="evidence" value="ECO:0007669"/>
    <property type="project" value="UniProtKB-KW"/>
</dbReference>
<dbReference type="GO" id="GO:0017111">
    <property type="term" value="F:ribonucleoside triphosphate phosphatase activity"/>
    <property type="evidence" value="ECO:0007669"/>
    <property type="project" value="InterPro"/>
</dbReference>
<dbReference type="GO" id="GO:0036222">
    <property type="term" value="F:XTP diphosphatase activity"/>
    <property type="evidence" value="ECO:0007669"/>
    <property type="project" value="RHEA"/>
</dbReference>
<dbReference type="GO" id="GO:0009117">
    <property type="term" value="P:nucleotide metabolic process"/>
    <property type="evidence" value="ECO:0007669"/>
    <property type="project" value="UniProtKB-KW"/>
</dbReference>
<dbReference type="GO" id="GO:0009146">
    <property type="term" value="P:purine nucleoside triphosphate catabolic process"/>
    <property type="evidence" value="ECO:0007669"/>
    <property type="project" value="UniProtKB-UniRule"/>
</dbReference>
<dbReference type="CDD" id="cd00515">
    <property type="entry name" value="HAM1"/>
    <property type="match status" value="1"/>
</dbReference>
<dbReference type="FunFam" id="3.90.950.10:FF:000001">
    <property type="entry name" value="dITP/XTP pyrophosphatase"/>
    <property type="match status" value="1"/>
</dbReference>
<dbReference type="Gene3D" id="3.90.950.10">
    <property type="match status" value="1"/>
</dbReference>
<dbReference type="HAMAP" id="MF_01405">
    <property type="entry name" value="Non_canon_purine_NTPase"/>
    <property type="match status" value="1"/>
</dbReference>
<dbReference type="InterPro" id="IPR020922">
    <property type="entry name" value="dITP/XTP_pyrophosphatase"/>
</dbReference>
<dbReference type="InterPro" id="IPR029001">
    <property type="entry name" value="ITPase-like_fam"/>
</dbReference>
<dbReference type="InterPro" id="IPR002637">
    <property type="entry name" value="RdgB/HAM1"/>
</dbReference>
<dbReference type="NCBIfam" id="TIGR00042">
    <property type="entry name" value="RdgB/HAM1 family non-canonical purine NTP pyrophosphatase"/>
    <property type="match status" value="1"/>
</dbReference>
<dbReference type="PANTHER" id="PTHR11067:SF9">
    <property type="entry name" value="INOSINE TRIPHOSPHATE PYROPHOSPHATASE"/>
    <property type="match status" value="1"/>
</dbReference>
<dbReference type="PANTHER" id="PTHR11067">
    <property type="entry name" value="INOSINE TRIPHOSPHATE PYROPHOSPHATASE/HAM1 PROTEIN"/>
    <property type="match status" value="1"/>
</dbReference>
<dbReference type="Pfam" id="PF01725">
    <property type="entry name" value="Ham1p_like"/>
    <property type="match status" value="1"/>
</dbReference>
<dbReference type="SUPFAM" id="SSF52972">
    <property type="entry name" value="ITPase-like"/>
    <property type="match status" value="1"/>
</dbReference>
<protein>
    <recommendedName>
        <fullName evidence="1">dITP/XTP pyrophosphatase</fullName>
        <ecNumber evidence="1">3.6.1.66</ecNumber>
    </recommendedName>
    <alternativeName>
        <fullName evidence="1">Non-canonical purine NTP pyrophosphatase</fullName>
    </alternativeName>
    <alternativeName>
        <fullName evidence="1">Non-standard purine NTP pyrophosphatase</fullName>
    </alternativeName>
    <alternativeName>
        <fullName evidence="1">Nucleoside-triphosphate diphosphatase</fullName>
    </alternativeName>
    <alternativeName>
        <fullName evidence="1">Nucleoside-triphosphate pyrophosphatase</fullName>
        <shortName evidence="1">NTPase</shortName>
    </alternativeName>
</protein>
<comment type="function">
    <text evidence="1">Pyrophosphatase that catalyzes the hydrolysis of nucleoside triphosphates to their monophosphate derivatives, with a high preference for the non-canonical purine nucleotides XTP (xanthosine triphosphate), dITP (deoxyinosine triphosphate) and ITP. Seems to function as a house-cleaning enzyme that removes non-canonical purine nucleotides from the nucleotide pool, thus preventing their incorporation into DNA/RNA and avoiding chromosomal lesions.</text>
</comment>
<comment type="catalytic activity">
    <reaction evidence="1">
        <text>XTP + H2O = XMP + diphosphate + H(+)</text>
        <dbReference type="Rhea" id="RHEA:28610"/>
        <dbReference type="ChEBI" id="CHEBI:15377"/>
        <dbReference type="ChEBI" id="CHEBI:15378"/>
        <dbReference type="ChEBI" id="CHEBI:33019"/>
        <dbReference type="ChEBI" id="CHEBI:57464"/>
        <dbReference type="ChEBI" id="CHEBI:61314"/>
        <dbReference type="EC" id="3.6.1.66"/>
    </reaction>
</comment>
<comment type="catalytic activity">
    <reaction evidence="1">
        <text>dITP + H2O = dIMP + diphosphate + H(+)</text>
        <dbReference type="Rhea" id="RHEA:28342"/>
        <dbReference type="ChEBI" id="CHEBI:15377"/>
        <dbReference type="ChEBI" id="CHEBI:15378"/>
        <dbReference type="ChEBI" id="CHEBI:33019"/>
        <dbReference type="ChEBI" id="CHEBI:61194"/>
        <dbReference type="ChEBI" id="CHEBI:61382"/>
        <dbReference type="EC" id="3.6.1.66"/>
    </reaction>
</comment>
<comment type="catalytic activity">
    <reaction evidence="1">
        <text>ITP + H2O = IMP + diphosphate + H(+)</text>
        <dbReference type="Rhea" id="RHEA:29399"/>
        <dbReference type="ChEBI" id="CHEBI:15377"/>
        <dbReference type="ChEBI" id="CHEBI:15378"/>
        <dbReference type="ChEBI" id="CHEBI:33019"/>
        <dbReference type="ChEBI" id="CHEBI:58053"/>
        <dbReference type="ChEBI" id="CHEBI:61402"/>
        <dbReference type="EC" id="3.6.1.66"/>
    </reaction>
</comment>
<comment type="cofactor">
    <cofactor evidence="1">
        <name>Mg(2+)</name>
        <dbReference type="ChEBI" id="CHEBI:18420"/>
    </cofactor>
    <text evidence="1">Binds 1 Mg(2+) ion per subunit.</text>
</comment>
<comment type="subunit">
    <text evidence="1">Homodimer.</text>
</comment>
<comment type="similarity">
    <text evidence="1">Belongs to the HAM1 NTPase family.</text>
</comment>
<keyword id="KW-0378">Hydrolase</keyword>
<keyword id="KW-0460">Magnesium</keyword>
<keyword id="KW-0479">Metal-binding</keyword>
<keyword id="KW-0546">Nucleotide metabolism</keyword>
<keyword id="KW-0547">Nucleotide-binding</keyword>
<keyword id="KW-1185">Reference proteome</keyword>
<proteinExistence type="inferred from homology"/>
<organism>
    <name type="scientific">Delftia acidovorans (strain DSM 14801 / SPH-1)</name>
    <dbReference type="NCBI Taxonomy" id="398578"/>
    <lineage>
        <taxon>Bacteria</taxon>
        <taxon>Pseudomonadati</taxon>
        <taxon>Pseudomonadota</taxon>
        <taxon>Betaproteobacteria</taxon>
        <taxon>Burkholderiales</taxon>
        <taxon>Comamonadaceae</taxon>
        <taxon>Delftia</taxon>
    </lineage>
</organism>
<evidence type="ECO:0000255" key="1">
    <source>
        <dbReference type="HAMAP-Rule" id="MF_01405"/>
    </source>
</evidence>
<name>IXTPA_DELAS</name>
<reference key="1">
    <citation type="submission" date="2007-11" db="EMBL/GenBank/DDBJ databases">
        <title>Complete sequence of Delftia acidovorans DSM 14801 / SPH-1.</title>
        <authorList>
            <person name="Copeland A."/>
            <person name="Lucas S."/>
            <person name="Lapidus A."/>
            <person name="Barry K."/>
            <person name="Glavina del Rio T."/>
            <person name="Dalin E."/>
            <person name="Tice H."/>
            <person name="Pitluck S."/>
            <person name="Lowry S."/>
            <person name="Clum A."/>
            <person name="Schmutz J."/>
            <person name="Larimer F."/>
            <person name="Land M."/>
            <person name="Hauser L."/>
            <person name="Kyrpides N."/>
            <person name="Kim E."/>
            <person name="Schleheck D."/>
            <person name="Richardson P."/>
        </authorList>
    </citation>
    <scope>NUCLEOTIDE SEQUENCE [LARGE SCALE GENOMIC DNA]</scope>
    <source>
        <strain>DSM 14801 / SPH-1</strain>
    </source>
</reference>
<accession>A9BTA7</accession>